<keyword id="KW-0030">Aminoacyl-tRNA synthetase</keyword>
<keyword id="KW-0067">ATP-binding</keyword>
<keyword id="KW-0963">Cytoplasm</keyword>
<keyword id="KW-0436">Ligase</keyword>
<keyword id="KW-0460">Magnesium</keyword>
<keyword id="KW-0479">Metal-binding</keyword>
<keyword id="KW-0547">Nucleotide-binding</keyword>
<keyword id="KW-0648">Protein biosynthesis</keyword>
<keyword id="KW-0694">RNA-binding</keyword>
<keyword id="KW-0820">tRNA-binding</keyword>
<reference key="1">
    <citation type="journal article" date="2005" name="J. Bacteriol.">
        <title>Insights on evolution of virulence and resistance from the complete genome analysis of an early methicillin-resistant Staphylococcus aureus strain and a biofilm-producing methicillin-resistant Staphylococcus epidermidis strain.</title>
        <authorList>
            <person name="Gill S.R."/>
            <person name="Fouts D.E."/>
            <person name="Archer G.L."/>
            <person name="Mongodin E.F."/>
            <person name="DeBoy R.T."/>
            <person name="Ravel J."/>
            <person name="Paulsen I.T."/>
            <person name="Kolonay J.F."/>
            <person name="Brinkac L.M."/>
            <person name="Beanan M.J."/>
            <person name="Dodson R.J."/>
            <person name="Daugherty S.C."/>
            <person name="Madupu R."/>
            <person name="Angiuoli S.V."/>
            <person name="Durkin A.S."/>
            <person name="Haft D.H."/>
            <person name="Vamathevan J.J."/>
            <person name="Khouri H."/>
            <person name="Utterback T.R."/>
            <person name="Lee C."/>
            <person name="Dimitrov G."/>
            <person name="Jiang L."/>
            <person name="Qin H."/>
            <person name="Weidman J."/>
            <person name="Tran K."/>
            <person name="Kang K.H."/>
            <person name="Hance I.R."/>
            <person name="Nelson K.E."/>
            <person name="Fraser C.M."/>
        </authorList>
    </citation>
    <scope>NUCLEOTIDE SEQUENCE [LARGE SCALE GENOMIC DNA]</scope>
    <source>
        <strain>COL</strain>
    </source>
</reference>
<gene>
    <name evidence="1" type="primary">pheT</name>
    <name type="ordered locus">SACOL1149</name>
</gene>
<sequence>MLISNEWLKEYVTIDDSVSNLAERITRTGIEVDDLIDYTKDIKNLVVGFVKSKEKHPDADKLNVCQVDIGEDEPVQIVCGAPNVDAGQYVIVAKVGGRLPGGIKIKRAKLRGERSEGMICSLQEIGISSNYIPKSFESGIYVFSEAQVPGTDALQALYLDDQVMEFDLTPNRADALSMIGTAYEVAALYNTKMTKPETTSNELDLSANDELTVTIENEDKVPYYSARVVHDVTIEPSPIWMQARLIKAGIRPINNVVDISNYVLLEYGQPLHMFDQDAIGSQQIVVRQANEGEKMTTLDDTERELLTSDIVITNGQTPIALAGVMGGDFSEVKEQTSNIVIEGAIFDPVSIRHTSRRLNLRSESSSRFEKGIATEFVDEAVDRACYLLQTYANGKVLKDRVSSGELGAFITPIDITADKINRTIGFDLSQNDIVTIFNQLGFDTEINDDVITVLVPSRRKDITIKEDLIEEVARIYGYDDIPSTLPVFDKVTSGQLTDRQYKTRMVKEVLEGAGLDQAITYSLVSKEDATAFSMQQRQTIDLLMPMSEAHASLRQSLLPHLIEAASYNVARKNKDVKLFEIGNVFFANGEGELPDQVEYLSGILTGDYVVNQWQGKKETVDFYLAKGVVDRVSEKLNLEFSYRRADIDGLHPGRTAEILLENKVVGFIGELHPILAADNDLKRTYVFELNFDALMAVSVGYINYQPIPRFPGMSRDIALEVDQNIPAADLLSTIHAHGGNILKDTLVFDVYQGEHLEKGKKSIAIRLNYLDTEETLTDERVSKVQAEIEAALIEQGAVIR</sequence>
<dbReference type="EC" id="6.1.1.20" evidence="1"/>
<dbReference type="EMBL" id="CP000046">
    <property type="protein sequence ID" value="AAW38028.1"/>
    <property type="molecule type" value="Genomic_DNA"/>
</dbReference>
<dbReference type="RefSeq" id="WP_000908982.1">
    <property type="nucleotide sequence ID" value="NZ_JBGOFO010000002.1"/>
</dbReference>
<dbReference type="SMR" id="Q5HGU5"/>
<dbReference type="KEGG" id="sac:SACOL1149"/>
<dbReference type="HOGENOM" id="CLU_016891_0_0_9"/>
<dbReference type="Proteomes" id="UP000000530">
    <property type="component" value="Chromosome"/>
</dbReference>
<dbReference type="GO" id="GO:0009328">
    <property type="term" value="C:phenylalanine-tRNA ligase complex"/>
    <property type="evidence" value="ECO:0007669"/>
    <property type="project" value="TreeGrafter"/>
</dbReference>
<dbReference type="GO" id="GO:0005524">
    <property type="term" value="F:ATP binding"/>
    <property type="evidence" value="ECO:0007669"/>
    <property type="project" value="UniProtKB-UniRule"/>
</dbReference>
<dbReference type="GO" id="GO:0140096">
    <property type="term" value="F:catalytic activity, acting on a protein"/>
    <property type="evidence" value="ECO:0007669"/>
    <property type="project" value="UniProtKB-ARBA"/>
</dbReference>
<dbReference type="GO" id="GO:0000287">
    <property type="term" value="F:magnesium ion binding"/>
    <property type="evidence" value="ECO:0007669"/>
    <property type="project" value="UniProtKB-UniRule"/>
</dbReference>
<dbReference type="GO" id="GO:0004826">
    <property type="term" value="F:phenylalanine-tRNA ligase activity"/>
    <property type="evidence" value="ECO:0007669"/>
    <property type="project" value="UniProtKB-UniRule"/>
</dbReference>
<dbReference type="GO" id="GO:0016740">
    <property type="term" value="F:transferase activity"/>
    <property type="evidence" value="ECO:0007669"/>
    <property type="project" value="UniProtKB-ARBA"/>
</dbReference>
<dbReference type="GO" id="GO:0000049">
    <property type="term" value="F:tRNA binding"/>
    <property type="evidence" value="ECO:0007669"/>
    <property type="project" value="UniProtKB-KW"/>
</dbReference>
<dbReference type="GO" id="GO:0006432">
    <property type="term" value="P:phenylalanyl-tRNA aminoacylation"/>
    <property type="evidence" value="ECO:0007669"/>
    <property type="project" value="UniProtKB-UniRule"/>
</dbReference>
<dbReference type="CDD" id="cd00769">
    <property type="entry name" value="PheRS_beta_core"/>
    <property type="match status" value="1"/>
</dbReference>
<dbReference type="CDD" id="cd02796">
    <property type="entry name" value="tRNA_bind_bactPheRS"/>
    <property type="match status" value="1"/>
</dbReference>
<dbReference type="FunFam" id="2.40.50.140:FF:000045">
    <property type="entry name" value="Phenylalanine--tRNA ligase beta subunit"/>
    <property type="match status" value="1"/>
</dbReference>
<dbReference type="FunFam" id="3.30.56.10:FF:000002">
    <property type="entry name" value="Phenylalanine--tRNA ligase beta subunit"/>
    <property type="match status" value="1"/>
</dbReference>
<dbReference type="FunFam" id="3.30.70.380:FF:000001">
    <property type="entry name" value="Phenylalanine--tRNA ligase beta subunit"/>
    <property type="match status" value="1"/>
</dbReference>
<dbReference type="FunFam" id="3.30.930.10:FF:000022">
    <property type="entry name" value="Phenylalanine--tRNA ligase beta subunit"/>
    <property type="match status" value="1"/>
</dbReference>
<dbReference type="FunFam" id="3.50.40.10:FF:000001">
    <property type="entry name" value="Phenylalanine--tRNA ligase beta subunit"/>
    <property type="match status" value="1"/>
</dbReference>
<dbReference type="Gene3D" id="3.30.56.10">
    <property type="match status" value="2"/>
</dbReference>
<dbReference type="Gene3D" id="3.30.930.10">
    <property type="entry name" value="Bira Bifunctional Protein, Domain 2"/>
    <property type="match status" value="1"/>
</dbReference>
<dbReference type="Gene3D" id="3.30.70.380">
    <property type="entry name" value="Ferrodoxin-fold anticodon-binding domain"/>
    <property type="match status" value="1"/>
</dbReference>
<dbReference type="Gene3D" id="2.40.50.140">
    <property type="entry name" value="Nucleic acid-binding proteins"/>
    <property type="match status" value="1"/>
</dbReference>
<dbReference type="Gene3D" id="3.50.40.10">
    <property type="entry name" value="Phenylalanyl-trna Synthetase, Chain B, domain 3"/>
    <property type="match status" value="1"/>
</dbReference>
<dbReference type="HAMAP" id="MF_00283">
    <property type="entry name" value="Phe_tRNA_synth_beta1"/>
    <property type="match status" value="1"/>
</dbReference>
<dbReference type="InterPro" id="IPR045864">
    <property type="entry name" value="aa-tRNA-synth_II/BPL/LPL"/>
</dbReference>
<dbReference type="InterPro" id="IPR005146">
    <property type="entry name" value="B3/B4_tRNA-bd"/>
</dbReference>
<dbReference type="InterPro" id="IPR009061">
    <property type="entry name" value="DNA-bd_dom_put_sf"/>
</dbReference>
<dbReference type="InterPro" id="IPR005121">
    <property type="entry name" value="Fdx_antiC-bd"/>
</dbReference>
<dbReference type="InterPro" id="IPR036690">
    <property type="entry name" value="Fdx_antiC-bd_sf"/>
</dbReference>
<dbReference type="InterPro" id="IPR012340">
    <property type="entry name" value="NA-bd_OB-fold"/>
</dbReference>
<dbReference type="InterPro" id="IPR045060">
    <property type="entry name" value="Phe-tRNA-ligase_IIc_bsu"/>
</dbReference>
<dbReference type="InterPro" id="IPR004532">
    <property type="entry name" value="Phe-tRNA-ligase_IIc_bsu_bact"/>
</dbReference>
<dbReference type="InterPro" id="IPR020825">
    <property type="entry name" value="Phe-tRNA_synthase-like_B3/B4"/>
</dbReference>
<dbReference type="InterPro" id="IPR041616">
    <property type="entry name" value="PheRS_beta_core"/>
</dbReference>
<dbReference type="InterPro" id="IPR002547">
    <property type="entry name" value="tRNA-bd_dom"/>
</dbReference>
<dbReference type="InterPro" id="IPR033714">
    <property type="entry name" value="tRNA_bind_bactPheRS"/>
</dbReference>
<dbReference type="InterPro" id="IPR005147">
    <property type="entry name" value="tRNA_synthase_B5-dom"/>
</dbReference>
<dbReference type="NCBIfam" id="TIGR00472">
    <property type="entry name" value="pheT_bact"/>
    <property type="match status" value="1"/>
</dbReference>
<dbReference type="NCBIfam" id="NF045760">
    <property type="entry name" value="YtpR"/>
    <property type="match status" value="1"/>
</dbReference>
<dbReference type="PANTHER" id="PTHR10947:SF0">
    <property type="entry name" value="PHENYLALANINE--TRNA LIGASE BETA SUBUNIT"/>
    <property type="match status" value="1"/>
</dbReference>
<dbReference type="PANTHER" id="PTHR10947">
    <property type="entry name" value="PHENYLALANYL-TRNA SYNTHETASE BETA CHAIN AND LEUCINE-RICH REPEAT-CONTAINING PROTEIN 47"/>
    <property type="match status" value="1"/>
</dbReference>
<dbReference type="Pfam" id="PF03483">
    <property type="entry name" value="B3_4"/>
    <property type="match status" value="1"/>
</dbReference>
<dbReference type="Pfam" id="PF03484">
    <property type="entry name" value="B5"/>
    <property type="match status" value="1"/>
</dbReference>
<dbReference type="Pfam" id="PF03147">
    <property type="entry name" value="FDX-ACB"/>
    <property type="match status" value="1"/>
</dbReference>
<dbReference type="Pfam" id="PF01588">
    <property type="entry name" value="tRNA_bind"/>
    <property type="match status" value="1"/>
</dbReference>
<dbReference type="Pfam" id="PF17759">
    <property type="entry name" value="tRNA_synthFbeta"/>
    <property type="match status" value="1"/>
</dbReference>
<dbReference type="SMART" id="SM00873">
    <property type="entry name" value="B3_4"/>
    <property type="match status" value="1"/>
</dbReference>
<dbReference type="SMART" id="SM00874">
    <property type="entry name" value="B5"/>
    <property type="match status" value="1"/>
</dbReference>
<dbReference type="SMART" id="SM00896">
    <property type="entry name" value="FDX-ACB"/>
    <property type="match status" value="1"/>
</dbReference>
<dbReference type="SUPFAM" id="SSF54991">
    <property type="entry name" value="Anticodon-binding domain of PheRS"/>
    <property type="match status" value="1"/>
</dbReference>
<dbReference type="SUPFAM" id="SSF55681">
    <property type="entry name" value="Class II aaRS and biotin synthetases"/>
    <property type="match status" value="1"/>
</dbReference>
<dbReference type="SUPFAM" id="SSF50249">
    <property type="entry name" value="Nucleic acid-binding proteins"/>
    <property type="match status" value="1"/>
</dbReference>
<dbReference type="SUPFAM" id="SSF56037">
    <property type="entry name" value="PheT/TilS domain"/>
    <property type="match status" value="1"/>
</dbReference>
<dbReference type="SUPFAM" id="SSF46955">
    <property type="entry name" value="Putative DNA-binding domain"/>
    <property type="match status" value="1"/>
</dbReference>
<dbReference type="PROSITE" id="PS51483">
    <property type="entry name" value="B5"/>
    <property type="match status" value="1"/>
</dbReference>
<dbReference type="PROSITE" id="PS51447">
    <property type="entry name" value="FDX_ACB"/>
    <property type="match status" value="1"/>
</dbReference>
<dbReference type="PROSITE" id="PS50886">
    <property type="entry name" value="TRBD"/>
    <property type="match status" value="1"/>
</dbReference>
<proteinExistence type="inferred from homology"/>
<evidence type="ECO:0000255" key="1">
    <source>
        <dbReference type="HAMAP-Rule" id="MF_00283"/>
    </source>
</evidence>
<comment type="catalytic activity">
    <reaction evidence="1">
        <text>tRNA(Phe) + L-phenylalanine + ATP = L-phenylalanyl-tRNA(Phe) + AMP + diphosphate + H(+)</text>
        <dbReference type="Rhea" id="RHEA:19413"/>
        <dbReference type="Rhea" id="RHEA-COMP:9668"/>
        <dbReference type="Rhea" id="RHEA-COMP:9699"/>
        <dbReference type="ChEBI" id="CHEBI:15378"/>
        <dbReference type="ChEBI" id="CHEBI:30616"/>
        <dbReference type="ChEBI" id="CHEBI:33019"/>
        <dbReference type="ChEBI" id="CHEBI:58095"/>
        <dbReference type="ChEBI" id="CHEBI:78442"/>
        <dbReference type="ChEBI" id="CHEBI:78531"/>
        <dbReference type="ChEBI" id="CHEBI:456215"/>
        <dbReference type="EC" id="6.1.1.20"/>
    </reaction>
</comment>
<comment type="cofactor">
    <cofactor evidence="1">
        <name>Mg(2+)</name>
        <dbReference type="ChEBI" id="CHEBI:18420"/>
    </cofactor>
    <text evidence="1">Binds 2 magnesium ions per tetramer.</text>
</comment>
<comment type="subunit">
    <text evidence="1">Tetramer of two alpha and two beta subunits.</text>
</comment>
<comment type="subcellular location">
    <subcellularLocation>
        <location>Cytoplasm</location>
    </subcellularLocation>
</comment>
<comment type="similarity">
    <text evidence="1">Belongs to the phenylalanyl-tRNA synthetase beta subunit family. Type 1 subfamily.</text>
</comment>
<organism>
    <name type="scientific">Staphylococcus aureus (strain COL)</name>
    <dbReference type="NCBI Taxonomy" id="93062"/>
    <lineage>
        <taxon>Bacteria</taxon>
        <taxon>Bacillati</taxon>
        <taxon>Bacillota</taxon>
        <taxon>Bacilli</taxon>
        <taxon>Bacillales</taxon>
        <taxon>Staphylococcaceae</taxon>
        <taxon>Staphylococcus</taxon>
    </lineage>
</organism>
<name>SYFB_STAAC</name>
<accession>Q5HGU5</accession>
<protein>
    <recommendedName>
        <fullName evidence="1">Phenylalanine--tRNA ligase beta subunit</fullName>
        <ecNumber evidence="1">6.1.1.20</ecNumber>
    </recommendedName>
    <alternativeName>
        <fullName evidence="1">Phenylalanyl-tRNA synthetase beta subunit</fullName>
        <shortName evidence="1">PheRS</shortName>
    </alternativeName>
</protein>
<feature type="chain" id="PRO_0000126948" description="Phenylalanine--tRNA ligase beta subunit">
    <location>
        <begin position="1"/>
        <end position="800"/>
    </location>
</feature>
<feature type="domain" description="tRNA-binding" evidence="1">
    <location>
        <begin position="39"/>
        <end position="154"/>
    </location>
</feature>
<feature type="domain" description="B5" evidence="1">
    <location>
        <begin position="408"/>
        <end position="483"/>
    </location>
</feature>
<feature type="domain" description="FDX-ACB" evidence="1">
    <location>
        <begin position="708"/>
        <end position="800"/>
    </location>
</feature>
<feature type="binding site" evidence="1">
    <location>
        <position position="461"/>
    </location>
    <ligand>
        <name>Mg(2+)</name>
        <dbReference type="ChEBI" id="CHEBI:18420"/>
        <note>shared with alpha subunit</note>
    </ligand>
</feature>
<feature type="binding site" evidence="1">
    <location>
        <position position="467"/>
    </location>
    <ligand>
        <name>Mg(2+)</name>
        <dbReference type="ChEBI" id="CHEBI:18420"/>
        <note>shared with alpha subunit</note>
    </ligand>
</feature>
<feature type="binding site" evidence="1">
    <location>
        <position position="470"/>
    </location>
    <ligand>
        <name>Mg(2+)</name>
        <dbReference type="ChEBI" id="CHEBI:18420"/>
        <note>shared with alpha subunit</note>
    </ligand>
</feature>
<feature type="binding site" evidence="1">
    <location>
        <position position="471"/>
    </location>
    <ligand>
        <name>Mg(2+)</name>
        <dbReference type="ChEBI" id="CHEBI:18420"/>
        <note>shared with alpha subunit</note>
    </ligand>
</feature>